<name>NALF2_MOUSE</name>
<protein>
    <recommendedName>
        <fullName>NALCN channel auxiliary factor 2</fullName>
    </recommendedName>
    <alternativeName>
        <fullName>Protein TED</fullName>
    </alternativeName>
    <alternativeName>
        <fullName>Transmembrane protein 28</fullName>
    </alternativeName>
    <alternativeName>
        <fullName>Transmembrane protein FAM155B</fullName>
    </alternativeName>
</protein>
<comment type="function">
    <text evidence="1">Probable component of the NALCN channel complex, a channel that regulates the resting membrane potential and controls neuronal excitability.</text>
</comment>
<comment type="subcellular location">
    <subcellularLocation>
        <location evidence="4">Membrane</location>
        <topology evidence="4">Multi-pass membrane protein</topology>
    </subcellularLocation>
</comment>
<comment type="similarity">
    <text evidence="4">Belongs to the NALF family.</text>
</comment>
<keyword id="KW-0325">Glycoprotein</keyword>
<keyword id="KW-0472">Membrane</keyword>
<keyword id="KW-1185">Reference proteome</keyword>
<keyword id="KW-0812">Transmembrane</keyword>
<keyword id="KW-1133">Transmembrane helix</keyword>
<gene>
    <name type="primary">Nalf2</name>
    <name type="synonym">Fam155b</name>
    <name type="synonym">Tmem28</name>
</gene>
<dbReference type="EMBL" id="BX000691">
    <property type="status" value="NOT_ANNOTATED_CDS"/>
    <property type="molecule type" value="Genomic_DNA"/>
</dbReference>
<dbReference type="CCDS" id="CCDS41072.1"/>
<dbReference type="RefSeq" id="NP_001074752.1">
    <property type="nucleotide sequence ID" value="NM_001081283.2"/>
</dbReference>
<dbReference type="SMR" id="A2BDP1"/>
<dbReference type="FunCoup" id="A2BDP1">
    <property type="interactions" value="773"/>
</dbReference>
<dbReference type="STRING" id="10090.ENSMUSP00000094090"/>
<dbReference type="GlyCosmos" id="A2BDP1">
    <property type="glycosylation" value="1 site, No reported glycans"/>
</dbReference>
<dbReference type="GlyGen" id="A2BDP1">
    <property type="glycosylation" value="1 site"/>
</dbReference>
<dbReference type="PhosphoSitePlus" id="A2BDP1"/>
<dbReference type="PaxDb" id="10090-ENSMUSP00000094090"/>
<dbReference type="ProteomicsDB" id="271522"/>
<dbReference type="Antibodypedia" id="27337">
    <property type="antibodies" value="81 antibodies from 15 providers"/>
</dbReference>
<dbReference type="Ensembl" id="ENSMUST00000096363.3">
    <property type="protein sequence ID" value="ENSMUSP00000094090.3"/>
    <property type="gene ID" value="ENSMUSG00000071719.3"/>
</dbReference>
<dbReference type="GeneID" id="620592"/>
<dbReference type="KEGG" id="mmu:620592"/>
<dbReference type="UCSC" id="uc009tvn.1">
    <property type="organism name" value="mouse"/>
</dbReference>
<dbReference type="AGR" id="MGI:3648377"/>
<dbReference type="CTD" id="27112"/>
<dbReference type="MGI" id="MGI:3648377">
    <property type="gene designation" value="Nalf2"/>
</dbReference>
<dbReference type="VEuPathDB" id="HostDB:ENSMUSG00000071719"/>
<dbReference type="eggNOG" id="ENOG502QQKW">
    <property type="taxonomic scope" value="Eukaryota"/>
</dbReference>
<dbReference type="GeneTree" id="ENSGT00940000161362"/>
<dbReference type="HOGENOM" id="CLU_058453_0_0_1"/>
<dbReference type="InParanoid" id="A2BDP1"/>
<dbReference type="OMA" id="QWVSCEA"/>
<dbReference type="OrthoDB" id="10047996at2759"/>
<dbReference type="PhylomeDB" id="A2BDP1"/>
<dbReference type="TreeFam" id="TF331752"/>
<dbReference type="BioGRID-ORCS" id="620592">
    <property type="hits" value="0 hits in 77 CRISPR screens"/>
</dbReference>
<dbReference type="ChiTaRS" id="Fam155a">
    <property type="organism name" value="mouse"/>
</dbReference>
<dbReference type="PRO" id="PR:A2BDP1"/>
<dbReference type="Proteomes" id="UP000000589">
    <property type="component" value="Chromosome X"/>
</dbReference>
<dbReference type="RNAct" id="A2BDP1">
    <property type="molecule type" value="protein"/>
</dbReference>
<dbReference type="Bgee" id="ENSMUSG00000071719">
    <property type="expression patterns" value="Expressed in dentate gyrus of hippocampal formation granule cell and 31 other cell types or tissues"/>
</dbReference>
<dbReference type="GO" id="GO:0016020">
    <property type="term" value="C:membrane"/>
    <property type="evidence" value="ECO:0007669"/>
    <property type="project" value="UniProtKB-SubCell"/>
</dbReference>
<dbReference type="InterPro" id="IPR055288">
    <property type="entry name" value="NALCN_aux_factor_1/2"/>
</dbReference>
<dbReference type="PANTHER" id="PTHR15819:SF8">
    <property type="entry name" value="NALCN CHANNEL AUXILIARY FACTOR 2"/>
    <property type="match status" value="1"/>
</dbReference>
<dbReference type="PANTHER" id="PTHR15819">
    <property type="entry name" value="TRANSMEMBRANE PROTEIN FAM155"/>
    <property type="match status" value="1"/>
</dbReference>
<organism>
    <name type="scientific">Mus musculus</name>
    <name type="common">Mouse</name>
    <dbReference type="NCBI Taxonomy" id="10090"/>
    <lineage>
        <taxon>Eukaryota</taxon>
        <taxon>Metazoa</taxon>
        <taxon>Chordata</taxon>
        <taxon>Craniata</taxon>
        <taxon>Vertebrata</taxon>
        <taxon>Euteleostomi</taxon>
        <taxon>Mammalia</taxon>
        <taxon>Eutheria</taxon>
        <taxon>Euarchontoglires</taxon>
        <taxon>Glires</taxon>
        <taxon>Rodentia</taxon>
        <taxon>Myomorpha</taxon>
        <taxon>Muroidea</taxon>
        <taxon>Muridae</taxon>
        <taxon>Murinae</taxon>
        <taxon>Mus</taxon>
        <taxon>Mus</taxon>
    </lineage>
</organism>
<feature type="chain" id="PRO_0000339376" description="NALCN channel auxiliary factor 2">
    <location>
        <begin position="1"/>
        <end position="471"/>
    </location>
</feature>
<feature type="transmembrane region" description="Helical" evidence="2">
    <location>
        <begin position="47"/>
        <end position="67"/>
    </location>
</feature>
<feature type="transmembrane region" description="Helical" evidence="2">
    <location>
        <begin position="432"/>
        <end position="452"/>
    </location>
</feature>
<feature type="region of interest" description="Disordered" evidence="3">
    <location>
        <begin position="76"/>
        <end position="115"/>
    </location>
</feature>
<feature type="region of interest" description="Disordered" evidence="3">
    <location>
        <begin position="158"/>
        <end position="178"/>
    </location>
</feature>
<feature type="region of interest" description="Disordered" evidence="3">
    <location>
        <begin position="399"/>
        <end position="424"/>
    </location>
</feature>
<feature type="compositionally biased region" description="Pro residues" evidence="3">
    <location>
        <begin position="90"/>
        <end position="105"/>
    </location>
</feature>
<feature type="compositionally biased region" description="Pro residues" evidence="3">
    <location>
        <begin position="161"/>
        <end position="171"/>
    </location>
</feature>
<feature type="glycosylation site" description="N-linked (GlcNAc...) asparagine" evidence="2">
    <location>
        <position position="120"/>
    </location>
</feature>
<reference key="1">
    <citation type="journal article" date="2009" name="PLoS Biol.">
        <title>Lineage-specific biology revealed by a finished genome assembly of the mouse.</title>
        <authorList>
            <person name="Church D.M."/>
            <person name="Goodstadt L."/>
            <person name="Hillier L.W."/>
            <person name="Zody M.C."/>
            <person name="Goldstein S."/>
            <person name="She X."/>
            <person name="Bult C.J."/>
            <person name="Agarwala R."/>
            <person name="Cherry J.L."/>
            <person name="DiCuccio M."/>
            <person name="Hlavina W."/>
            <person name="Kapustin Y."/>
            <person name="Meric P."/>
            <person name="Maglott D."/>
            <person name="Birtle Z."/>
            <person name="Marques A.C."/>
            <person name="Graves T."/>
            <person name="Zhou S."/>
            <person name="Teague B."/>
            <person name="Potamousis K."/>
            <person name="Churas C."/>
            <person name="Place M."/>
            <person name="Herschleb J."/>
            <person name="Runnheim R."/>
            <person name="Forrest D."/>
            <person name="Amos-Landgraf J."/>
            <person name="Schwartz D.C."/>
            <person name="Cheng Z."/>
            <person name="Lindblad-Toh K."/>
            <person name="Eichler E.E."/>
            <person name="Ponting C.P."/>
        </authorList>
    </citation>
    <scope>NUCLEOTIDE SEQUENCE [LARGE SCALE GENOMIC DNA]</scope>
    <source>
        <strain>C57BL/6J</strain>
    </source>
</reference>
<accession>A2BDP1</accession>
<proteinExistence type="inferred from homology"/>
<evidence type="ECO:0000250" key="1">
    <source>
        <dbReference type="UniProtKB" id="O75949"/>
    </source>
</evidence>
<evidence type="ECO:0000255" key="2"/>
<evidence type="ECO:0000256" key="3">
    <source>
        <dbReference type="SAM" id="MobiDB-lite"/>
    </source>
</evidence>
<evidence type="ECO:0000305" key="4"/>
<sequence length="471" mass="52389">MFRGAWMWPGKDAAALTICCCCCCWAPRQSDKPCADSERAQRWRLSLASLLFFTVLLADHLWLCAGARPRARELSSAMRPPWGAGRERQPVPPRAVLPPPPPSPGEPSASSGTCGPRYSNLTKAAPAAGSGPVCNGVPEPTGLDAACTKLESLQRLFEPTTPAPPLRPPDSPSRAPEFPSAKKNLLKGHFRNFTLSFCDTYTVWDLLLGMDRPDSLDCSLDTLLGDLLAVVASPGSGTWEACSNCIEAYQRLDRHAQEKYDEFDLVLHKYLQAEEYSIRSCTKGCKAVYKAWLCSEYFSVTQQECQNWVPCKQYCLEVQTRCPFILPDNEEMVYGGLPGFICTGLMDTSPKRPETKCCDVQWVSCESEKKKFKDSEPPKTHHQQFHHSYFHHYHHQYHHYHPRHEPPSRVSNKPSLLPVSGGSRLSPSRIRLCVLVLILLHTVVSFSSSQSGGGLGLETLPALEEGLTQEE</sequence>